<name>PSBK_PROM5</name>
<organism>
    <name type="scientific">Prochlorococcus marinus (strain MIT 9515)</name>
    <dbReference type="NCBI Taxonomy" id="167542"/>
    <lineage>
        <taxon>Bacteria</taxon>
        <taxon>Bacillati</taxon>
        <taxon>Cyanobacteriota</taxon>
        <taxon>Cyanophyceae</taxon>
        <taxon>Synechococcales</taxon>
        <taxon>Prochlorococcaceae</taxon>
        <taxon>Prochlorococcus</taxon>
    </lineage>
</organism>
<accession>A2BUQ3</accession>
<evidence type="ECO:0000255" key="1">
    <source>
        <dbReference type="HAMAP-Rule" id="MF_00441"/>
    </source>
</evidence>
<evidence type="ECO:0000305" key="2"/>
<gene>
    <name evidence="1" type="primary">psbK</name>
    <name type="ordered locus">P9515_03051</name>
</gene>
<comment type="function">
    <text evidence="1">One of the components of the core complex of photosystem II (PSII). PSII is a light-driven water:plastoquinone oxidoreductase that uses light energy to abstract electrons from H(2)O, generating O(2) and a proton gradient subsequently used for ATP formation. It consists of a core antenna complex that captures photons, and an electron transfer chain that converts photonic excitation into a charge separation.</text>
</comment>
<comment type="subunit">
    <text evidence="2">PSII is composed of 1 copy each of membrane proteins PsbA, PsbB, PsbC, PsbD, PsbE, PsbF, PsbH, PsbI, PsbJ, PsbK, PsbL, PsbM, PsbT, PsbX, PsbY, Psb30/Ycf12, peripheral proteins PsbO, CyanoQ (PsbQ), PsbU, PsbV and a large number of cofactors. It forms dimeric complexes.</text>
</comment>
<comment type="subcellular location">
    <subcellularLocation>
        <location evidence="1">Cellular thylakoid membrane</location>
        <topology evidence="1">Single-pass membrane protein</topology>
    </subcellularLocation>
</comment>
<comment type="similarity">
    <text evidence="1">Belongs to the PsbK family.</text>
</comment>
<keyword id="KW-0472">Membrane</keyword>
<keyword id="KW-0602">Photosynthesis</keyword>
<keyword id="KW-0604">Photosystem II</keyword>
<keyword id="KW-0674">Reaction center</keyword>
<keyword id="KW-0793">Thylakoid</keyword>
<keyword id="KW-0812">Transmembrane</keyword>
<keyword id="KW-1133">Transmembrane helix</keyword>
<sequence>MLTLLNTFAELPEAYKAFAPTVDVLPLIPLFFFLLVFVWQAAVGFK</sequence>
<reference key="1">
    <citation type="journal article" date="2007" name="PLoS Genet.">
        <title>Patterns and implications of gene gain and loss in the evolution of Prochlorococcus.</title>
        <authorList>
            <person name="Kettler G.C."/>
            <person name="Martiny A.C."/>
            <person name="Huang K."/>
            <person name="Zucker J."/>
            <person name="Coleman M.L."/>
            <person name="Rodrigue S."/>
            <person name="Chen F."/>
            <person name="Lapidus A."/>
            <person name="Ferriera S."/>
            <person name="Johnson J."/>
            <person name="Steglich C."/>
            <person name="Church G.M."/>
            <person name="Richardson P."/>
            <person name="Chisholm S.W."/>
        </authorList>
    </citation>
    <scope>NUCLEOTIDE SEQUENCE [LARGE SCALE GENOMIC DNA]</scope>
    <source>
        <strain>MIT 9515</strain>
    </source>
</reference>
<protein>
    <recommendedName>
        <fullName evidence="1">Photosystem II reaction center protein K</fullName>
        <shortName evidence="1">PSII-K</shortName>
    </recommendedName>
</protein>
<dbReference type="EMBL" id="CP000552">
    <property type="protein sequence ID" value="ABM71514.1"/>
    <property type="molecule type" value="Genomic_DNA"/>
</dbReference>
<dbReference type="RefSeq" id="WP_011131909.1">
    <property type="nucleotide sequence ID" value="NC_008817.1"/>
</dbReference>
<dbReference type="SMR" id="A2BUQ3"/>
<dbReference type="STRING" id="167542.P9515_03051"/>
<dbReference type="GeneID" id="60200507"/>
<dbReference type="KEGG" id="pmc:P9515_03051"/>
<dbReference type="HOGENOM" id="CLU_174355_0_0_3"/>
<dbReference type="Proteomes" id="UP000001589">
    <property type="component" value="Chromosome"/>
</dbReference>
<dbReference type="GO" id="GO:0009539">
    <property type="term" value="C:photosystem II reaction center"/>
    <property type="evidence" value="ECO:0007669"/>
    <property type="project" value="InterPro"/>
</dbReference>
<dbReference type="GO" id="GO:0031676">
    <property type="term" value="C:plasma membrane-derived thylakoid membrane"/>
    <property type="evidence" value="ECO:0007669"/>
    <property type="project" value="UniProtKB-SubCell"/>
</dbReference>
<dbReference type="GO" id="GO:0015979">
    <property type="term" value="P:photosynthesis"/>
    <property type="evidence" value="ECO:0007669"/>
    <property type="project" value="UniProtKB-UniRule"/>
</dbReference>
<dbReference type="HAMAP" id="MF_00441">
    <property type="entry name" value="PSII_PsbK"/>
    <property type="match status" value="1"/>
</dbReference>
<dbReference type="InterPro" id="IPR003687">
    <property type="entry name" value="PSII_PsbK"/>
</dbReference>
<dbReference type="InterPro" id="IPR037270">
    <property type="entry name" value="PSII_PsbK_sf"/>
</dbReference>
<dbReference type="NCBIfam" id="NF002715">
    <property type="entry name" value="PRK02553.1"/>
    <property type="match status" value="1"/>
</dbReference>
<dbReference type="PANTHER" id="PTHR35325">
    <property type="match status" value="1"/>
</dbReference>
<dbReference type="PANTHER" id="PTHR35325:SF1">
    <property type="entry name" value="PHOTOSYSTEM II REACTION CENTER PROTEIN K"/>
    <property type="match status" value="1"/>
</dbReference>
<dbReference type="Pfam" id="PF02533">
    <property type="entry name" value="PsbK"/>
    <property type="match status" value="1"/>
</dbReference>
<dbReference type="SUPFAM" id="SSF161037">
    <property type="entry name" value="Photosystem II reaction center protein K, PsbK"/>
    <property type="match status" value="1"/>
</dbReference>
<feature type="propeptide" id="PRO_0000316078" evidence="1">
    <location>
        <begin position="1"/>
        <end position="9"/>
    </location>
</feature>
<feature type="chain" id="PRO_1000025980" description="Photosystem II reaction center protein K" evidence="1">
    <location>
        <begin position="10"/>
        <end position="46"/>
    </location>
</feature>
<feature type="transmembrane region" description="Helical" evidence="1">
    <location>
        <begin position="25"/>
        <end position="45"/>
    </location>
</feature>
<proteinExistence type="inferred from homology"/>